<feature type="chain" id="PRO_0000413368" description="Probable cyclic nucleotide phosphodiesterase Fisuc_1441/FSU_1912">
    <location>
        <begin position="1"/>
        <end position="256"/>
    </location>
</feature>
<feature type="binding site" evidence="2">
    <location>
        <position position="20"/>
    </location>
    <ligand>
        <name>Fe cation</name>
        <dbReference type="ChEBI" id="CHEBI:24875"/>
        <label>1</label>
    </ligand>
</feature>
<feature type="binding site" evidence="1">
    <location>
        <position position="22"/>
    </location>
    <ligand>
        <name>AMP</name>
        <dbReference type="ChEBI" id="CHEBI:456215"/>
    </ligand>
</feature>
<feature type="binding site" evidence="2">
    <location>
        <position position="22"/>
    </location>
    <ligand>
        <name>Fe cation</name>
        <dbReference type="ChEBI" id="CHEBI:24875"/>
        <label>1</label>
    </ligand>
</feature>
<feature type="binding site" evidence="1">
    <location>
        <position position="59"/>
    </location>
    <ligand>
        <name>AMP</name>
        <dbReference type="ChEBI" id="CHEBI:456215"/>
    </ligand>
</feature>
<feature type="binding site" evidence="2">
    <location>
        <position position="59"/>
    </location>
    <ligand>
        <name>Fe cation</name>
        <dbReference type="ChEBI" id="CHEBI:24875"/>
        <label>1</label>
    </ligand>
</feature>
<feature type="binding site" evidence="2">
    <location>
        <position position="59"/>
    </location>
    <ligand>
        <name>Fe cation</name>
        <dbReference type="ChEBI" id="CHEBI:24875"/>
        <label>2</label>
    </ligand>
</feature>
<feature type="binding site" evidence="1">
    <location>
        <begin position="89"/>
        <end position="90"/>
    </location>
    <ligand>
        <name>AMP</name>
        <dbReference type="ChEBI" id="CHEBI:456215"/>
    </ligand>
</feature>
<feature type="binding site" evidence="2">
    <location>
        <position position="89"/>
    </location>
    <ligand>
        <name>Fe cation</name>
        <dbReference type="ChEBI" id="CHEBI:24875"/>
        <label>2</label>
    </ligand>
</feature>
<feature type="binding site" evidence="2">
    <location>
        <position position="156"/>
    </location>
    <ligand>
        <name>Fe cation</name>
        <dbReference type="ChEBI" id="CHEBI:24875"/>
        <label>2</label>
    </ligand>
</feature>
<feature type="binding site" evidence="2">
    <location>
        <position position="196"/>
    </location>
    <ligand>
        <name>Fe cation</name>
        <dbReference type="ChEBI" id="CHEBI:24875"/>
        <label>2</label>
    </ligand>
</feature>
<feature type="binding site" evidence="1">
    <location>
        <position position="198"/>
    </location>
    <ligand>
        <name>AMP</name>
        <dbReference type="ChEBI" id="CHEBI:456215"/>
    </ligand>
</feature>
<feature type="binding site" evidence="2">
    <location>
        <position position="198"/>
    </location>
    <ligand>
        <name>Fe cation</name>
        <dbReference type="ChEBI" id="CHEBI:24875"/>
        <label>1</label>
    </ligand>
</feature>
<keyword id="KW-0378">Hydrolase</keyword>
<keyword id="KW-0408">Iron</keyword>
<keyword id="KW-0479">Metal-binding</keyword>
<keyword id="KW-0547">Nucleotide-binding</keyword>
<gene>
    <name type="ordered locus">Fisuc_1441</name>
    <name type="ordered locus">FSU_1912</name>
</gene>
<dbReference type="EC" id="3.1.4.-" evidence="1"/>
<dbReference type="EMBL" id="CP001792">
    <property type="protein sequence ID" value="ACX75038.1"/>
    <property type="status" value="ALT_INIT"/>
    <property type="molecule type" value="Genomic_DNA"/>
</dbReference>
<dbReference type="EMBL" id="CP002158">
    <property type="protein sequence ID" value="ADL25604.1"/>
    <property type="molecule type" value="Genomic_DNA"/>
</dbReference>
<dbReference type="SMR" id="C9RR52"/>
<dbReference type="STRING" id="59374.FSU_1912"/>
<dbReference type="KEGG" id="fsc:FSU_1912"/>
<dbReference type="KEGG" id="fsu:Fisuc_1441"/>
<dbReference type="PATRIC" id="fig|59374.8.peg.1844"/>
<dbReference type="eggNOG" id="COG1409">
    <property type="taxonomic scope" value="Bacteria"/>
</dbReference>
<dbReference type="HOGENOM" id="CLU_070320_0_1_0"/>
<dbReference type="OrthoDB" id="9811542at2"/>
<dbReference type="Proteomes" id="UP000000517">
    <property type="component" value="Chromosome"/>
</dbReference>
<dbReference type="GO" id="GO:0004115">
    <property type="term" value="F:3',5'-cyclic-AMP phosphodiesterase activity"/>
    <property type="evidence" value="ECO:0007669"/>
    <property type="project" value="UniProtKB-EC"/>
</dbReference>
<dbReference type="GO" id="GO:0046872">
    <property type="term" value="F:metal ion binding"/>
    <property type="evidence" value="ECO:0007669"/>
    <property type="project" value="UniProtKB-KW"/>
</dbReference>
<dbReference type="GO" id="GO:0000166">
    <property type="term" value="F:nucleotide binding"/>
    <property type="evidence" value="ECO:0007669"/>
    <property type="project" value="UniProtKB-KW"/>
</dbReference>
<dbReference type="Gene3D" id="3.60.21.10">
    <property type="match status" value="1"/>
</dbReference>
<dbReference type="InterPro" id="IPR004843">
    <property type="entry name" value="Calcineurin-like_PHP_ApaH"/>
</dbReference>
<dbReference type="InterPro" id="IPR050884">
    <property type="entry name" value="CNP_phosphodiesterase-III"/>
</dbReference>
<dbReference type="InterPro" id="IPR029052">
    <property type="entry name" value="Metallo-depent_PP-like"/>
</dbReference>
<dbReference type="PANTHER" id="PTHR42988:SF2">
    <property type="entry name" value="CYCLIC NUCLEOTIDE PHOSPHODIESTERASE CBUA0032-RELATED"/>
    <property type="match status" value="1"/>
</dbReference>
<dbReference type="PANTHER" id="PTHR42988">
    <property type="entry name" value="PHOSPHOHYDROLASE"/>
    <property type="match status" value="1"/>
</dbReference>
<dbReference type="Pfam" id="PF00149">
    <property type="entry name" value="Metallophos"/>
    <property type="match status" value="1"/>
</dbReference>
<dbReference type="SUPFAM" id="SSF56300">
    <property type="entry name" value="Metallo-dependent phosphatases"/>
    <property type="match status" value="1"/>
</dbReference>
<proteinExistence type="inferred from homology"/>
<accession>C9RR52</accession>
<accession>D9SBF1</accession>
<organism>
    <name type="scientific">Fibrobacter succinogenes (strain ATCC 19169 / S85)</name>
    <dbReference type="NCBI Taxonomy" id="59374"/>
    <lineage>
        <taxon>Bacteria</taxon>
        <taxon>Pseudomonadati</taxon>
        <taxon>Fibrobacterota</taxon>
        <taxon>Fibrobacteria</taxon>
        <taxon>Fibrobacterales</taxon>
        <taxon>Fibrobacteraceae</taxon>
        <taxon>Fibrobacter</taxon>
    </lineage>
</organism>
<evidence type="ECO:0000250" key="1">
    <source>
        <dbReference type="UniProtKB" id="P9WP65"/>
    </source>
</evidence>
<evidence type="ECO:0000250" key="2">
    <source>
        <dbReference type="UniProtKB" id="Q6XBH1"/>
    </source>
</evidence>
<evidence type="ECO:0000305" key="3"/>
<protein>
    <recommendedName>
        <fullName evidence="1">Probable cyclic nucleotide phosphodiesterase Fisuc_1441/FSU_1912</fullName>
        <ecNumber evidence="1">3.1.4.-</ecNumber>
    </recommendedName>
</protein>
<sequence length="256" mass="29186">MYILRSCMEKKVLKIGQISDAHIGDDDRLVQDIDVRKNFLTAYNSESMKDLDLLVLSGDLADNASTDAYSFIAGVIKDSKVPVCIIPGNHDNLEVMEKVFDLKDKVHNGKCYYRYDLDGRSIFFLDSADGTVSSDQLSWLEQETAKIDGEVLLFLHHPPCLCGHKFMDLRYSMKNIAEVQATLSKIKNLKHIFVGHYHSEMTIQLEDKTVYVTPSTQMQIDPNITVFCLSSAAPRWRLIEWGENFMETKVYFSNTP</sequence>
<comment type="cofactor">
    <cofactor evidence="2">
        <name>Fe(2+)</name>
        <dbReference type="ChEBI" id="CHEBI:29033"/>
    </cofactor>
    <text evidence="2">Binds 2 Fe(2+) ions per subunit.</text>
</comment>
<comment type="similarity">
    <text evidence="3">Belongs to the cyclic nucleotide phosphodiesterase class-III family.</text>
</comment>
<comment type="sequence caution" evidence="3">
    <conflict type="erroneous initiation">
        <sequence resource="EMBL-CDS" id="ACX75038"/>
    </conflict>
    <text>Truncated N-terminus.</text>
</comment>
<reference key="1">
    <citation type="submission" date="2009-10" db="EMBL/GenBank/DDBJ databases">
        <title>Complete sequence of Fibrobacter succinogenes subsp. succinogenes S85.</title>
        <authorList>
            <consortium name="US DOE Joint Genome Institute"/>
            <person name="Lucas S."/>
            <person name="Copeland A."/>
            <person name="Lapidus A."/>
            <person name="Glavina del Rio T."/>
            <person name="Tice H."/>
            <person name="Bruce D."/>
            <person name="Goodwin L."/>
            <person name="Pitluck S."/>
            <person name="Chertkov O."/>
            <person name="Detter J.C."/>
            <person name="Han C."/>
            <person name="Tapia R."/>
            <person name="Larimer F."/>
            <person name="Land M."/>
            <person name="Hauser L."/>
            <person name="Kyrpides N."/>
            <person name="Mikhailova N."/>
            <person name="Weimer P.J."/>
            <person name="Stevenson D.M."/>
            <person name="Boyum J."/>
            <person name="Brumm P.I."/>
            <person name="Mead D."/>
        </authorList>
    </citation>
    <scope>NUCLEOTIDE SEQUENCE [LARGE SCALE GENOMIC DNA]</scope>
    <source>
        <strain>ATCC 19169 / S85</strain>
    </source>
</reference>
<reference key="2">
    <citation type="submission" date="2010-08" db="EMBL/GenBank/DDBJ databases">
        <title>Complete sequence of Fibrobacter succinogenes subsp. succinogenes S85.</title>
        <authorList>
            <person name="Durkin A.S."/>
            <person name="Nelson K.E."/>
            <person name="Morrison M."/>
            <person name="Forsberg C.W."/>
            <person name="Wilson D.B."/>
            <person name="Russell J.B."/>
            <person name="Cann I.K.O."/>
            <person name="Mackie R.I."/>
            <person name="White B.A."/>
        </authorList>
    </citation>
    <scope>NUCLEOTIDE SEQUENCE [LARGE SCALE GENOMIC DNA]</scope>
    <source>
        <strain>ATCC 19169 / S85</strain>
    </source>
</reference>
<name>CNPD3_FIBSS</name>